<name>OTSA_SALTY</name>
<reference key="1">
    <citation type="journal article" date="2001" name="Nature">
        <title>Complete genome sequence of Salmonella enterica serovar Typhimurium LT2.</title>
        <authorList>
            <person name="McClelland M."/>
            <person name="Sanderson K.E."/>
            <person name="Spieth J."/>
            <person name="Clifton S.W."/>
            <person name="Latreille P."/>
            <person name="Courtney L."/>
            <person name="Porwollik S."/>
            <person name="Ali J."/>
            <person name="Dante M."/>
            <person name="Du F."/>
            <person name="Hou S."/>
            <person name="Layman D."/>
            <person name="Leonard S."/>
            <person name="Nguyen C."/>
            <person name="Scott K."/>
            <person name="Holmes A."/>
            <person name="Grewal N."/>
            <person name="Mulvaney E."/>
            <person name="Ryan E."/>
            <person name="Sun H."/>
            <person name="Florea L."/>
            <person name="Miller W."/>
            <person name="Stoneking T."/>
            <person name="Nhan M."/>
            <person name="Waterston R."/>
            <person name="Wilson R.K."/>
        </authorList>
    </citation>
    <scope>NUCLEOTIDE SEQUENCE [LARGE SCALE GENOMIC DNA]</scope>
    <source>
        <strain>LT2 / SGSC1412 / ATCC 700720</strain>
    </source>
</reference>
<sequence length="473" mass="53581">MSRLVVVSNRIAPPDNKGGAGGLAVGVLGALKAAGGLWFGWSGETGNEDEPLKKVTKGNITWASFNLSEQDYEDYYCQFSNAVLWPAFHYRLDLVQFQRPAWEGYMRVNALLADKLLPLIKENDIIWVHDYHLLPFASELRKRGVNNRIGFFLHIPFPTPEIFNALPPHDELLEQLCDFDLLGFQTENDRLAFLDSLSSQTRVTTRSGKQHIAWGKDFQTEVYPIGIEPDEIALQAAGPLPPKLAQLKAELKNVKNIFSVERLDYSKGLPERFLAYEALLENYPQHRGKIRYTQIAPTSRGEVQAYQDIRHQLETEAGRINGKYGQLGWTPLYYLNQHFDRKLLMKIFRYSDVGLVTPLRDGMNLVAKEFVAAQDPANPGVLVLSQFAGAANELTSALIVNPYDRDDVAAALNRALTMPLAERISRHAEMLDVIVKNDINRWQERFIHDLKEVTPRSPERQQQNNVATFPKLA</sequence>
<feature type="initiator methionine" description="Removed" evidence="1">
    <location>
        <position position="1"/>
    </location>
</feature>
<feature type="chain" id="PRO_0000122493" description="Trehalose-6-phosphate synthase">
    <location>
        <begin position="2"/>
        <end position="473"/>
    </location>
</feature>
<feature type="region of interest" description="Disordered" evidence="3">
    <location>
        <begin position="454"/>
        <end position="473"/>
    </location>
</feature>
<feature type="binding site" evidence="2">
    <location>
        <position position="10"/>
    </location>
    <ligand>
        <name>D-glucose 6-phosphate</name>
        <dbReference type="ChEBI" id="CHEBI:61548"/>
    </ligand>
</feature>
<feature type="binding site" evidence="2">
    <location>
        <begin position="21"/>
        <end position="22"/>
    </location>
    <ligand>
        <name>UDP-alpha-D-glucose</name>
        <dbReference type="ChEBI" id="CHEBI:58885"/>
    </ligand>
</feature>
<feature type="binding site" evidence="2">
    <location>
        <position position="76"/>
    </location>
    <ligand>
        <name>D-glucose 6-phosphate</name>
        <dbReference type="ChEBI" id="CHEBI:61548"/>
    </ligand>
</feature>
<feature type="binding site" evidence="2">
    <location>
        <position position="130"/>
    </location>
    <ligand>
        <name>D-glucose 6-phosphate</name>
        <dbReference type="ChEBI" id="CHEBI:61548"/>
    </ligand>
</feature>
<feature type="binding site" evidence="2">
    <location>
        <position position="262"/>
    </location>
    <ligand>
        <name>UDP-alpha-D-glucose</name>
        <dbReference type="ChEBI" id="CHEBI:58885"/>
    </ligand>
</feature>
<feature type="binding site" evidence="2">
    <location>
        <position position="267"/>
    </location>
    <ligand>
        <name>UDP-alpha-D-glucose</name>
        <dbReference type="ChEBI" id="CHEBI:58885"/>
    </ligand>
</feature>
<feature type="binding site" evidence="2">
    <location>
        <position position="300"/>
    </location>
    <ligand>
        <name>D-glucose 6-phosphate</name>
        <dbReference type="ChEBI" id="CHEBI:61548"/>
    </ligand>
</feature>
<feature type="binding site" evidence="2">
    <location>
        <position position="339"/>
    </location>
    <ligand>
        <name>UDP-alpha-D-glucose</name>
        <dbReference type="ChEBI" id="CHEBI:58885"/>
    </ligand>
</feature>
<feature type="binding site" evidence="2">
    <location>
        <begin position="365"/>
        <end position="369"/>
    </location>
    <ligand>
        <name>UDP-alpha-D-glucose</name>
        <dbReference type="ChEBI" id="CHEBI:58885"/>
    </ligand>
</feature>
<feature type="site" description="Involved in alpha anomer selectivity" evidence="2">
    <location>
        <position position="85"/>
    </location>
</feature>
<feature type="site" description="Involved in alpha anomer selectivity" evidence="2">
    <location>
        <position position="155"/>
    </location>
</feature>
<protein>
    <recommendedName>
        <fullName evidence="2">Trehalose-6-phosphate synthase</fullName>
        <shortName evidence="2">TPS</shortName>
        <ecNumber evidence="2">2.4.1.15</ecNumber>
    </recommendedName>
    <alternativeName>
        <fullName evidence="2">Alpha,alpha-trehalose-phosphate synthase [UDP-forming]</fullName>
    </alternativeName>
    <alternativeName>
        <fullName evidence="2">Osmoregulatory trehalose synthesis protein A</fullName>
        <shortName evidence="2">OtsA</shortName>
    </alternativeName>
    <alternativeName>
        <fullName evidence="2">UDP-glucose-glucosephosphate glucosyltransferase</fullName>
    </alternativeName>
</protein>
<keyword id="KW-0328">Glycosyltransferase</keyword>
<keyword id="KW-1185">Reference proteome</keyword>
<keyword id="KW-0808">Transferase</keyword>
<proteinExistence type="inferred from homology"/>
<accession>P0CL06</accession>
<accession>P0A1Q0</accession>
<accession>Q9L893</accession>
<gene>
    <name evidence="2" type="primary">otsA</name>
    <name type="ordered locus">STM1928</name>
</gene>
<organism>
    <name type="scientific">Salmonella typhimurium (strain LT2 / SGSC1412 / ATCC 700720)</name>
    <dbReference type="NCBI Taxonomy" id="99287"/>
    <lineage>
        <taxon>Bacteria</taxon>
        <taxon>Pseudomonadati</taxon>
        <taxon>Pseudomonadota</taxon>
        <taxon>Gammaproteobacteria</taxon>
        <taxon>Enterobacterales</taxon>
        <taxon>Enterobacteriaceae</taxon>
        <taxon>Salmonella</taxon>
    </lineage>
</organism>
<evidence type="ECO:0000250" key="1"/>
<evidence type="ECO:0000250" key="2">
    <source>
        <dbReference type="UniProtKB" id="P31677"/>
    </source>
</evidence>
<evidence type="ECO:0000256" key="3">
    <source>
        <dbReference type="SAM" id="MobiDB-lite"/>
    </source>
</evidence>
<comment type="function">
    <text evidence="2">Probably involved in the osmoprotection via the biosynthesis of trehalose. Catalyzes the transfer of glucose from UDP-alpha-D-glucose (UDP-Glc) to D-glucose 6-phosphate (Glc-6-P) to form trehalose-6-phosphate. Acts with retention of the anomeric configuration of the UDP-sugar donor.</text>
</comment>
<comment type="catalytic activity">
    <reaction evidence="2">
        <text>D-glucose 6-phosphate + UDP-alpha-D-glucose = alpha,alpha-trehalose 6-phosphate + UDP + H(+)</text>
        <dbReference type="Rhea" id="RHEA:18889"/>
        <dbReference type="ChEBI" id="CHEBI:15378"/>
        <dbReference type="ChEBI" id="CHEBI:58223"/>
        <dbReference type="ChEBI" id="CHEBI:58429"/>
        <dbReference type="ChEBI" id="CHEBI:58885"/>
        <dbReference type="ChEBI" id="CHEBI:61548"/>
        <dbReference type="EC" id="2.4.1.15"/>
    </reaction>
</comment>
<comment type="pathway">
    <text evidence="2">Glycan biosynthesis; trehalose biosynthesis.</text>
</comment>
<comment type="subunit">
    <text evidence="2">Homotetramer.</text>
</comment>
<comment type="similarity">
    <text evidence="2">Belongs to the glycosyltransferase 20 family.</text>
</comment>
<dbReference type="EC" id="2.4.1.15" evidence="2"/>
<dbReference type="EMBL" id="AE006468">
    <property type="protein sequence ID" value="AAL20844.1"/>
    <property type="molecule type" value="Genomic_DNA"/>
</dbReference>
<dbReference type="RefSeq" id="NP_460885.1">
    <property type="nucleotide sequence ID" value="NC_003197.2"/>
</dbReference>
<dbReference type="RefSeq" id="WP_000089042.1">
    <property type="nucleotide sequence ID" value="NC_003197.2"/>
</dbReference>
<dbReference type="SMR" id="P0CL06"/>
<dbReference type="STRING" id="99287.STM1928"/>
<dbReference type="CAZy" id="GT20">
    <property type="family name" value="Glycosyltransferase Family 20"/>
</dbReference>
<dbReference type="PaxDb" id="99287-STM1928"/>
<dbReference type="GeneID" id="1253449"/>
<dbReference type="KEGG" id="stm:STM1928"/>
<dbReference type="PATRIC" id="fig|99287.12.peg.2045"/>
<dbReference type="HOGENOM" id="CLU_002351_7_1_6"/>
<dbReference type="OMA" id="NRTIWPL"/>
<dbReference type="PhylomeDB" id="P0CL06"/>
<dbReference type="BioCyc" id="SENT99287:STM1928-MONOMER"/>
<dbReference type="UniPathway" id="UPA00299"/>
<dbReference type="Proteomes" id="UP000001014">
    <property type="component" value="Chromosome"/>
</dbReference>
<dbReference type="GO" id="GO:0003825">
    <property type="term" value="F:alpha,alpha-trehalose-phosphate synthase (UDP-forming) activity"/>
    <property type="evidence" value="ECO:0007669"/>
    <property type="project" value="UniProtKB-EC"/>
</dbReference>
<dbReference type="GO" id="GO:0005992">
    <property type="term" value="P:trehalose biosynthetic process"/>
    <property type="evidence" value="ECO:0007669"/>
    <property type="project" value="UniProtKB-UniPathway"/>
</dbReference>
<dbReference type="CDD" id="cd03788">
    <property type="entry name" value="GT20_TPS"/>
    <property type="match status" value="1"/>
</dbReference>
<dbReference type="FunFam" id="3.40.50.2000:FF:000024">
    <property type="entry name" value="Trehalose-6-phosphate synthase"/>
    <property type="match status" value="1"/>
</dbReference>
<dbReference type="Gene3D" id="3.40.50.2000">
    <property type="entry name" value="Glycogen Phosphorylase B"/>
    <property type="match status" value="2"/>
</dbReference>
<dbReference type="InterPro" id="IPR001830">
    <property type="entry name" value="Glyco_trans_20"/>
</dbReference>
<dbReference type="InterPro" id="IPR012766">
    <property type="entry name" value="Trehalose_OtsA"/>
</dbReference>
<dbReference type="NCBIfam" id="NF007513">
    <property type="entry name" value="PRK10117.1"/>
    <property type="match status" value="1"/>
</dbReference>
<dbReference type="NCBIfam" id="TIGR02400">
    <property type="entry name" value="trehalose_OtsA"/>
    <property type="match status" value="1"/>
</dbReference>
<dbReference type="PANTHER" id="PTHR10788:SF106">
    <property type="entry name" value="BCDNA.GH08860"/>
    <property type="match status" value="1"/>
</dbReference>
<dbReference type="PANTHER" id="PTHR10788">
    <property type="entry name" value="TREHALOSE-6-PHOSPHATE SYNTHASE"/>
    <property type="match status" value="1"/>
</dbReference>
<dbReference type="Pfam" id="PF00982">
    <property type="entry name" value="Glyco_transf_20"/>
    <property type="match status" value="1"/>
</dbReference>
<dbReference type="SUPFAM" id="SSF53756">
    <property type="entry name" value="UDP-Glycosyltransferase/glycogen phosphorylase"/>
    <property type="match status" value="1"/>
</dbReference>